<gene>
    <name evidence="1" type="primary">rplJ</name>
    <name type="ordered locus">PA0667</name>
</gene>
<keyword id="KW-1185">Reference proteome</keyword>
<keyword id="KW-0687">Ribonucleoprotein</keyword>
<keyword id="KW-0689">Ribosomal protein</keyword>
<keyword id="KW-0694">RNA-binding</keyword>
<keyword id="KW-0699">rRNA-binding</keyword>
<proteinExistence type="inferred from homology"/>
<name>RL10_PHYAS</name>
<reference key="1">
    <citation type="journal article" date="2008" name="J. Bacteriol.">
        <title>Comparative genome analysis of 'Candidatus Phytoplasma australiense' (subgroup tuf-Australia I; rp-A) and 'Ca. Phytoplasma asteris' strains OY-M and AY-WB.</title>
        <authorList>
            <person name="Tran-Nguyen L.T."/>
            <person name="Kube M."/>
            <person name="Schneider B."/>
            <person name="Reinhardt R."/>
            <person name="Gibb K.S."/>
        </authorList>
    </citation>
    <scope>NUCLEOTIDE SEQUENCE [LARGE SCALE GENOMIC DNA]</scope>
</reference>
<comment type="function">
    <text evidence="1">Forms part of the ribosomal stalk, playing a central role in the interaction of the ribosome with GTP-bound translation factors.</text>
</comment>
<comment type="subunit">
    <text evidence="1">Part of the ribosomal stalk of the 50S ribosomal subunit. The N-terminus interacts with L11 and the large rRNA to form the base of the stalk. The C-terminus forms an elongated spine to which L12 dimers bind in a sequential fashion forming a multimeric L10(L12)X complex.</text>
</comment>
<comment type="similarity">
    <text evidence="1">Belongs to the universal ribosomal protein uL10 family.</text>
</comment>
<accession>B1VAM8</accession>
<sequence>MIKPQLAKKIETVSFLQEKISQAKTVIVFEYSNLPVSEFMKLRRQLKKIDCEVKVYPKNIMQRAFMNTNYQDLVSLLKGIKALIISQQELLEPIKVIYNFAKQNKVVKIVSGVVEQKIVSPQEINSLATLPSKEQMLALLSVAMLSPLRQLAFALKLLSEKQATNN</sequence>
<evidence type="ECO:0000255" key="1">
    <source>
        <dbReference type="HAMAP-Rule" id="MF_00362"/>
    </source>
</evidence>
<evidence type="ECO:0000305" key="2"/>
<feature type="chain" id="PRO_1000120995" description="Large ribosomal subunit protein uL10">
    <location>
        <begin position="1"/>
        <end position="166"/>
    </location>
</feature>
<protein>
    <recommendedName>
        <fullName evidence="1">Large ribosomal subunit protein uL10</fullName>
    </recommendedName>
    <alternativeName>
        <fullName evidence="2">50S ribosomal protein L10</fullName>
    </alternativeName>
</protein>
<dbReference type="EMBL" id="AM422018">
    <property type="protein sequence ID" value="CAM12001.1"/>
    <property type="molecule type" value="Genomic_DNA"/>
</dbReference>
<dbReference type="SMR" id="B1VAM8"/>
<dbReference type="STRING" id="59748.PA0667"/>
<dbReference type="KEGG" id="pal:PA0667"/>
<dbReference type="eggNOG" id="COG0244">
    <property type="taxonomic scope" value="Bacteria"/>
</dbReference>
<dbReference type="Proteomes" id="UP000008323">
    <property type="component" value="Chromosome"/>
</dbReference>
<dbReference type="GO" id="GO:1990904">
    <property type="term" value="C:ribonucleoprotein complex"/>
    <property type="evidence" value="ECO:0007669"/>
    <property type="project" value="UniProtKB-KW"/>
</dbReference>
<dbReference type="GO" id="GO:0005840">
    <property type="term" value="C:ribosome"/>
    <property type="evidence" value="ECO:0007669"/>
    <property type="project" value="UniProtKB-KW"/>
</dbReference>
<dbReference type="GO" id="GO:0070180">
    <property type="term" value="F:large ribosomal subunit rRNA binding"/>
    <property type="evidence" value="ECO:0007669"/>
    <property type="project" value="UniProtKB-UniRule"/>
</dbReference>
<dbReference type="GO" id="GO:0006412">
    <property type="term" value="P:translation"/>
    <property type="evidence" value="ECO:0007669"/>
    <property type="project" value="UniProtKB-UniRule"/>
</dbReference>
<dbReference type="CDD" id="cd05797">
    <property type="entry name" value="Ribosomal_L10"/>
    <property type="match status" value="1"/>
</dbReference>
<dbReference type="Gene3D" id="3.30.70.1730">
    <property type="match status" value="1"/>
</dbReference>
<dbReference type="HAMAP" id="MF_00362">
    <property type="entry name" value="Ribosomal_uL10"/>
    <property type="match status" value="1"/>
</dbReference>
<dbReference type="InterPro" id="IPR001790">
    <property type="entry name" value="Ribosomal_uL10"/>
</dbReference>
<dbReference type="InterPro" id="IPR043141">
    <property type="entry name" value="Ribosomal_uL10-like_sf"/>
</dbReference>
<dbReference type="InterPro" id="IPR022973">
    <property type="entry name" value="Ribosomal_uL10_bac"/>
</dbReference>
<dbReference type="InterPro" id="IPR047865">
    <property type="entry name" value="Ribosomal_uL10_bac_type"/>
</dbReference>
<dbReference type="NCBIfam" id="NF000955">
    <property type="entry name" value="PRK00099.1-1"/>
    <property type="match status" value="1"/>
</dbReference>
<dbReference type="PANTHER" id="PTHR11560">
    <property type="entry name" value="39S RIBOSOMAL PROTEIN L10, MITOCHONDRIAL"/>
    <property type="match status" value="1"/>
</dbReference>
<dbReference type="Pfam" id="PF00466">
    <property type="entry name" value="Ribosomal_L10"/>
    <property type="match status" value="1"/>
</dbReference>
<dbReference type="SUPFAM" id="SSF160369">
    <property type="entry name" value="Ribosomal protein L10-like"/>
    <property type="match status" value="1"/>
</dbReference>
<organism>
    <name type="scientific">Phytoplasma australiense</name>
    <dbReference type="NCBI Taxonomy" id="59748"/>
    <lineage>
        <taxon>Bacteria</taxon>
        <taxon>Bacillati</taxon>
        <taxon>Mycoplasmatota</taxon>
        <taxon>Mollicutes</taxon>
        <taxon>Acholeplasmatales</taxon>
        <taxon>Acholeplasmataceae</taxon>
        <taxon>Candidatus Phytoplasma</taxon>
        <taxon>16SrXII (Stolbur group)</taxon>
    </lineage>
</organism>